<gene>
    <name type="primary">DPBF3</name>
    <name type="synonym">AREB3</name>
    <name type="synonym">BZIP66</name>
    <name type="ordered locus">At3g56850</name>
    <name type="ORF">T8M16_180</name>
</gene>
<evidence type="ECO:0000250" key="1">
    <source>
        <dbReference type="UniProtKB" id="Q9M7Q2"/>
    </source>
</evidence>
<evidence type="ECO:0000255" key="2"/>
<evidence type="ECO:0000255" key="3">
    <source>
        <dbReference type="PROSITE-ProRule" id="PRU00978"/>
    </source>
</evidence>
<evidence type="ECO:0000256" key="4">
    <source>
        <dbReference type="SAM" id="MobiDB-lite"/>
    </source>
</evidence>
<evidence type="ECO:0000269" key="5">
    <source>
    </source>
</evidence>
<evidence type="ECO:0000269" key="6">
    <source>
    </source>
</evidence>
<evidence type="ECO:0000269" key="7">
    <source>
    </source>
</evidence>
<evidence type="ECO:0000305" key="8"/>
<evidence type="ECO:0007744" key="9">
    <source>
    </source>
</evidence>
<keyword id="KW-0938">Abscisic acid signaling pathway</keyword>
<keyword id="KW-0010">Activator</keyword>
<keyword id="KW-0238">DNA-binding</keyword>
<keyword id="KW-0539">Nucleus</keyword>
<keyword id="KW-0597">Phosphoprotein</keyword>
<keyword id="KW-1185">Reference proteome</keyword>
<keyword id="KW-0804">Transcription</keyword>
<keyword id="KW-0805">Transcription regulation</keyword>
<name>AI5L2_ARATH</name>
<comment type="function">
    <text>Binds to the embryo specification element and the ABA-responsive element (ABRE) of the Dc3 gene promoter. Could participate in abscisic acid-regulated gene expression during seed development.</text>
</comment>
<comment type="subunit">
    <text evidence="7">DNA-binding heterodimer with ABI5/DPBF1, DPBF2 or EEL/DPBF4. Interacts with the AFP proteins AFP1, AFP2, AFP3 and AFP4.</text>
</comment>
<comment type="subcellular location">
    <subcellularLocation>
        <location evidence="3 6">Nucleus</location>
    </subcellularLocation>
</comment>
<comment type="tissue specificity">
    <text evidence="5">Predominantly expressed in seeds.</text>
</comment>
<comment type="developmental stage">
    <text evidence="6">Expressed in embryo during the latest stages of seed maturation.</text>
</comment>
<comment type="similarity">
    <text evidence="8">Belongs to the bZIP family. ABI5 subfamily.</text>
</comment>
<feature type="chain" id="PRO_0000369607" description="ABSCISIC ACID-INSENSITIVE 5-like protein 2">
    <location>
        <begin position="1"/>
        <end position="297"/>
    </location>
</feature>
<feature type="domain" description="bZIP" evidence="3">
    <location>
        <begin position="225"/>
        <end position="288"/>
    </location>
</feature>
<feature type="region of interest" description="Disordered" evidence="4">
    <location>
        <begin position="100"/>
        <end position="119"/>
    </location>
</feature>
<feature type="region of interest" description="Disordered" evidence="4">
    <location>
        <begin position="138"/>
        <end position="157"/>
    </location>
</feature>
<feature type="region of interest" description="Basic motif" evidence="3">
    <location>
        <begin position="227"/>
        <end position="246"/>
    </location>
</feature>
<feature type="region of interest" description="Leucine-zipper" evidence="3">
    <location>
        <begin position="253"/>
        <end position="267"/>
    </location>
</feature>
<feature type="region of interest" description="Disordered" evidence="4">
    <location>
        <begin position="272"/>
        <end position="297"/>
    </location>
</feature>
<feature type="compositionally biased region" description="Gly residues" evidence="4">
    <location>
        <begin position="146"/>
        <end position="157"/>
    </location>
</feature>
<feature type="modified residue" description="Phosphoserine" evidence="2">
    <location>
        <position position="21"/>
    </location>
</feature>
<feature type="modified residue" description="Phosphoserine" evidence="9">
    <location>
        <position position="43"/>
    </location>
</feature>
<feature type="modified residue" description="Phosphoserine" evidence="1">
    <location>
        <position position="81"/>
    </location>
</feature>
<feature type="modified residue" description="Phosphothreonine" evidence="2">
    <location>
        <position position="118"/>
    </location>
</feature>
<feature type="sequence conflict" description="In Ref. 2; AAK19601." evidence="8" ref="2">
    <original>T</original>
    <variation>I</variation>
    <location>
        <position position="209"/>
    </location>
</feature>
<sequence>MDSQRGIVEQAKSQSLNRQSSLYSLTLDEVQNHLGSSGKALGSMNLDELLKSVCSVEANQPSSMAVNGGAAAQEGLSRQGSLTLPRDLSKKTVDEVWKDIQQNKNGGSAHERRDKQPTLGEMTLEDLLLKAGVVTETIPGSNHDGPVGGGSAGSGAGLGQNITQVGPWIQYHQLPSMPQPQAFMPYPVSDMQAMVSQSSLMGGLSDTQTPGRKRVASGEVVEKTVERRQKRMIKNRESAARSRARKQAYTHELEIKVSRLEEENERLRKQKEVEKILPSVPPPDPKRQLRRTSSAPF</sequence>
<dbReference type="EMBL" id="AB017162">
    <property type="protein sequence ID" value="BAB12406.1"/>
    <property type="molecule type" value="mRNA"/>
</dbReference>
<dbReference type="EMBL" id="AF334208">
    <property type="protein sequence ID" value="AAK19601.1"/>
    <property type="molecule type" value="mRNA"/>
</dbReference>
<dbReference type="EMBL" id="AL390921">
    <property type="protein sequence ID" value="CAC00748.1"/>
    <property type="molecule type" value="Genomic_DNA"/>
</dbReference>
<dbReference type="EMBL" id="CP002686">
    <property type="protein sequence ID" value="AEE79574.1"/>
    <property type="molecule type" value="Genomic_DNA"/>
</dbReference>
<dbReference type="EMBL" id="AY062448">
    <property type="protein sequence ID" value="AAL32526.1"/>
    <property type="molecule type" value="mRNA"/>
</dbReference>
<dbReference type="EMBL" id="AY081670">
    <property type="protein sequence ID" value="AAM10232.1"/>
    <property type="molecule type" value="mRNA"/>
</dbReference>
<dbReference type="PIR" id="T51273">
    <property type="entry name" value="T51273"/>
</dbReference>
<dbReference type="RefSeq" id="NP_191244.1">
    <property type="nucleotide sequence ID" value="NM_115544.3"/>
</dbReference>
<dbReference type="SMR" id="Q9LES3"/>
<dbReference type="BioGRID" id="10168">
    <property type="interactions" value="10"/>
</dbReference>
<dbReference type="FunCoup" id="Q9LES3">
    <property type="interactions" value="1728"/>
</dbReference>
<dbReference type="IntAct" id="Q9LES3">
    <property type="interactions" value="14"/>
</dbReference>
<dbReference type="STRING" id="3702.Q9LES3"/>
<dbReference type="iPTMnet" id="Q9LES3"/>
<dbReference type="MetOSite" id="Q9LES3"/>
<dbReference type="PaxDb" id="3702-AT3G56850.1"/>
<dbReference type="ProteomicsDB" id="244758"/>
<dbReference type="EnsemblPlants" id="AT3G56850.1">
    <property type="protein sequence ID" value="AT3G56850.1"/>
    <property type="gene ID" value="AT3G56850"/>
</dbReference>
<dbReference type="GeneID" id="824852"/>
<dbReference type="Gramene" id="AT3G56850.1">
    <property type="protein sequence ID" value="AT3G56850.1"/>
    <property type="gene ID" value="AT3G56850"/>
</dbReference>
<dbReference type="KEGG" id="ath:AT3G56850"/>
<dbReference type="Araport" id="AT3G56850"/>
<dbReference type="TAIR" id="AT3G56850">
    <property type="gene designation" value="AREB3"/>
</dbReference>
<dbReference type="eggNOG" id="ENOG502QR11">
    <property type="taxonomic scope" value="Eukaryota"/>
</dbReference>
<dbReference type="HOGENOM" id="CLU_043238_0_1_1"/>
<dbReference type="InParanoid" id="Q9LES3"/>
<dbReference type="OMA" id="EPQHPSI"/>
<dbReference type="OrthoDB" id="644067at2759"/>
<dbReference type="PhylomeDB" id="Q9LES3"/>
<dbReference type="PRO" id="PR:Q9LES3"/>
<dbReference type="Proteomes" id="UP000006548">
    <property type="component" value="Chromosome 3"/>
</dbReference>
<dbReference type="ExpressionAtlas" id="Q9LES3">
    <property type="expression patterns" value="baseline and differential"/>
</dbReference>
<dbReference type="GO" id="GO:0005634">
    <property type="term" value="C:nucleus"/>
    <property type="evidence" value="ECO:0000314"/>
    <property type="project" value="TAIR"/>
</dbReference>
<dbReference type="GO" id="GO:0003700">
    <property type="term" value="F:DNA-binding transcription factor activity"/>
    <property type="evidence" value="ECO:0000250"/>
    <property type="project" value="TAIR"/>
</dbReference>
<dbReference type="GO" id="GO:0000976">
    <property type="term" value="F:transcription cis-regulatory region binding"/>
    <property type="evidence" value="ECO:0000353"/>
    <property type="project" value="TAIR"/>
</dbReference>
<dbReference type="GO" id="GO:0009738">
    <property type="term" value="P:abscisic acid-activated signaling pathway"/>
    <property type="evidence" value="ECO:0007669"/>
    <property type="project" value="UniProtKB-KW"/>
</dbReference>
<dbReference type="GO" id="GO:0045893">
    <property type="term" value="P:positive regulation of DNA-templated transcription"/>
    <property type="evidence" value="ECO:0007669"/>
    <property type="project" value="InterPro"/>
</dbReference>
<dbReference type="CDD" id="cd14707">
    <property type="entry name" value="bZIP_plant_BZIP46"/>
    <property type="match status" value="1"/>
</dbReference>
<dbReference type="FunFam" id="1.20.5.170:FF:000036">
    <property type="entry name" value="ABSCISIC ACID-INSENSITIVE 5-like protein 2"/>
    <property type="match status" value="1"/>
</dbReference>
<dbReference type="Gene3D" id="1.20.5.170">
    <property type="match status" value="1"/>
</dbReference>
<dbReference type="InterPro" id="IPR004827">
    <property type="entry name" value="bZIP"/>
</dbReference>
<dbReference type="InterPro" id="IPR043452">
    <property type="entry name" value="BZIP46-like"/>
</dbReference>
<dbReference type="InterPro" id="IPR046347">
    <property type="entry name" value="bZIP_sf"/>
</dbReference>
<dbReference type="PANTHER" id="PTHR22952:SF385">
    <property type="entry name" value="ABSCISIC ACID-INSENSITIVE 5-LIKE PROTEIN 2"/>
    <property type="match status" value="1"/>
</dbReference>
<dbReference type="PANTHER" id="PTHR22952">
    <property type="entry name" value="CAMP-RESPONSE ELEMENT BINDING PROTEIN-RELATED"/>
    <property type="match status" value="1"/>
</dbReference>
<dbReference type="Pfam" id="PF00170">
    <property type="entry name" value="bZIP_1"/>
    <property type="match status" value="1"/>
</dbReference>
<dbReference type="SMART" id="SM00338">
    <property type="entry name" value="BRLZ"/>
    <property type="match status" value="1"/>
</dbReference>
<dbReference type="SUPFAM" id="SSF57959">
    <property type="entry name" value="Leucine zipper domain"/>
    <property type="match status" value="1"/>
</dbReference>
<dbReference type="PROSITE" id="PS50217">
    <property type="entry name" value="BZIP"/>
    <property type="match status" value="1"/>
</dbReference>
<dbReference type="PROSITE" id="PS00036">
    <property type="entry name" value="BZIP_BASIC"/>
    <property type="match status" value="1"/>
</dbReference>
<proteinExistence type="evidence at protein level"/>
<reference key="1">
    <citation type="journal article" date="2000" name="Proc. Natl. Acad. Sci. U.S.A.">
        <title>Arabidopsis basic leucine zipper transcription factors involved in an abscisic acid-dependent signal transduction pathway under drought and high-salinity conditions.</title>
        <authorList>
            <person name="Uno Y."/>
            <person name="Furihata T."/>
            <person name="Abe H."/>
            <person name="Yoshida R."/>
            <person name="Shinozaki K."/>
            <person name="Yamaguchi-Shinozaki K."/>
        </authorList>
    </citation>
    <scope>NUCLEOTIDE SEQUENCE [MRNA]</scope>
</reference>
<reference key="2">
    <citation type="journal article" date="2002" name="Plant Physiol.">
        <title>Arabidopsis ABI5 subfamily members have distinct DNA-binding and transcriptional activities.</title>
        <authorList>
            <person name="Kim S.Y."/>
            <person name="Ma J."/>
            <person name="Perret P."/>
            <person name="Li Z."/>
            <person name="Thomas T.L."/>
        </authorList>
    </citation>
    <scope>NUCLEOTIDE SEQUENCE [MRNA]</scope>
    <scope>TISSUE SPECIFICITY</scope>
    <scope>HETERODIMERIZATION</scope>
</reference>
<reference key="3">
    <citation type="journal article" date="2000" name="Nature">
        <title>Sequence and analysis of chromosome 3 of the plant Arabidopsis thaliana.</title>
        <authorList>
            <person name="Salanoubat M."/>
            <person name="Lemcke K."/>
            <person name="Rieger M."/>
            <person name="Ansorge W."/>
            <person name="Unseld M."/>
            <person name="Fartmann B."/>
            <person name="Valle G."/>
            <person name="Bloecker H."/>
            <person name="Perez-Alonso M."/>
            <person name="Obermaier B."/>
            <person name="Delseny M."/>
            <person name="Boutry M."/>
            <person name="Grivell L.A."/>
            <person name="Mache R."/>
            <person name="Puigdomenech P."/>
            <person name="De Simone V."/>
            <person name="Choisne N."/>
            <person name="Artiguenave F."/>
            <person name="Robert C."/>
            <person name="Brottier P."/>
            <person name="Wincker P."/>
            <person name="Cattolico L."/>
            <person name="Weissenbach J."/>
            <person name="Saurin W."/>
            <person name="Quetier F."/>
            <person name="Schaefer M."/>
            <person name="Mueller-Auer S."/>
            <person name="Gabel C."/>
            <person name="Fuchs M."/>
            <person name="Benes V."/>
            <person name="Wurmbach E."/>
            <person name="Drzonek H."/>
            <person name="Erfle H."/>
            <person name="Jordan N."/>
            <person name="Bangert S."/>
            <person name="Wiedelmann R."/>
            <person name="Kranz H."/>
            <person name="Voss H."/>
            <person name="Holland R."/>
            <person name="Brandt P."/>
            <person name="Nyakatura G."/>
            <person name="Vezzi A."/>
            <person name="D'Angelo M."/>
            <person name="Pallavicini A."/>
            <person name="Toppo S."/>
            <person name="Simionati B."/>
            <person name="Conrad A."/>
            <person name="Hornischer K."/>
            <person name="Kauer G."/>
            <person name="Loehnert T.-H."/>
            <person name="Nordsiek G."/>
            <person name="Reichelt J."/>
            <person name="Scharfe M."/>
            <person name="Schoen O."/>
            <person name="Bargues M."/>
            <person name="Terol J."/>
            <person name="Climent J."/>
            <person name="Navarro P."/>
            <person name="Collado C."/>
            <person name="Perez-Perez A."/>
            <person name="Ottenwaelder B."/>
            <person name="Duchemin D."/>
            <person name="Cooke R."/>
            <person name="Laudie M."/>
            <person name="Berger-Llauro C."/>
            <person name="Purnelle B."/>
            <person name="Masuy D."/>
            <person name="de Haan M."/>
            <person name="Maarse A.C."/>
            <person name="Alcaraz J.-P."/>
            <person name="Cottet A."/>
            <person name="Casacuberta E."/>
            <person name="Monfort A."/>
            <person name="Argiriou A."/>
            <person name="Flores M."/>
            <person name="Liguori R."/>
            <person name="Vitale D."/>
            <person name="Mannhaupt G."/>
            <person name="Haase D."/>
            <person name="Schoof H."/>
            <person name="Rudd S."/>
            <person name="Zaccaria P."/>
            <person name="Mewes H.-W."/>
            <person name="Mayer K.F.X."/>
            <person name="Kaul S."/>
            <person name="Town C.D."/>
            <person name="Koo H.L."/>
            <person name="Tallon L.J."/>
            <person name="Jenkins J."/>
            <person name="Rooney T."/>
            <person name="Rizzo M."/>
            <person name="Walts A."/>
            <person name="Utterback T."/>
            <person name="Fujii C.Y."/>
            <person name="Shea T.P."/>
            <person name="Creasy T.H."/>
            <person name="Haas B."/>
            <person name="Maiti R."/>
            <person name="Wu D."/>
            <person name="Peterson J."/>
            <person name="Van Aken S."/>
            <person name="Pai G."/>
            <person name="Militscher J."/>
            <person name="Sellers P."/>
            <person name="Gill J.E."/>
            <person name="Feldblyum T.V."/>
            <person name="Preuss D."/>
            <person name="Lin X."/>
            <person name="Nierman W.C."/>
            <person name="Salzberg S.L."/>
            <person name="White O."/>
            <person name="Venter J.C."/>
            <person name="Fraser C.M."/>
            <person name="Kaneko T."/>
            <person name="Nakamura Y."/>
            <person name="Sato S."/>
            <person name="Kato T."/>
            <person name="Asamizu E."/>
            <person name="Sasamoto S."/>
            <person name="Kimura T."/>
            <person name="Idesawa K."/>
            <person name="Kawashima K."/>
            <person name="Kishida Y."/>
            <person name="Kiyokawa C."/>
            <person name="Kohara M."/>
            <person name="Matsumoto M."/>
            <person name="Matsuno A."/>
            <person name="Muraki A."/>
            <person name="Nakayama S."/>
            <person name="Nakazaki N."/>
            <person name="Shinpo S."/>
            <person name="Takeuchi C."/>
            <person name="Wada T."/>
            <person name="Watanabe A."/>
            <person name="Yamada M."/>
            <person name="Yasuda M."/>
            <person name="Tabata S."/>
        </authorList>
    </citation>
    <scope>NUCLEOTIDE SEQUENCE [LARGE SCALE GENOMIC DNA]</scope>
    <source>
        <strain>cv. Columbia</strain>
    </source>
</reference>
<reference key="4">
    <citation type="journal article" date="2017" name="Plant J.">
        <title>Araport11: a complete reannotation of the Arabidopsis thaliana reference genome.</title>
        <authorList>
            <person name="Cheng C.Y."/>
            <person name="Krishnakumar V."/>
            <person name="Chan A.P."/>
            <person name="Thibaud-Nissen F."/>
            <person name="Schobel S."/>
            <person name="Town C.D."/>
        </authorList>
    </citation>
    <scope>GENOME REANNOTATION</scope>
    <source>
        <strain>cv. Columbia</strain>
    </source>
</reference>
<reference key="5">
    <citation type="journal article" date="2003" name="Science">
        <title>Empirical analysis of transcriptional activity in the Arabidopsis genome.</title>
        <authorList>
            <person name="Yamada K."/>
            <person name="Lim J."/>
            <person name="Dale J.M."/>
            <person name="Chen H."/>
            <person name="Shinn P."/>
            <person name="Palm C.J."/>
            <person name="Southwick A.M."/>
            <person name="Wu H.C."/>
            <person name="Kim C.J."/>
            <person name="Nguyen M."/>
            <person name="Pham P.K."/>
            <person name="Cheuk R.F."/>
            <person name="Karlin-Newmann G."/>
            <person name="Liu S.X."/>
            <person name="Lam B."/>
            <person name="Sakano H."/>
            <person name="Wu T."/>
            <person name="Yu G."/>
            <person name="Miranda M."/>
            <person name="Quach H.L."/>
            <person name="Tripp M."/>
            <person name="Chang C.H."/>
            <person name="Lee J.M."/>
            <person name="Toriumi M.J."/>
            <person name="Chan M.M."/>
            <person name="Tang C.C."/>
            <person name="Onodera C.S."/>
            <person name="Deng J.M."/>
            <person name="Akiyama K."/>
            <person name="Ansari Y."/>
            <person name="Arakawa T."/>
            <person name="Banh J."/>
            <person name="Banno F."/>
            <person name="Bowser L."/>
            <person name="Brooks S.Y."/>
            <person name="Carninci P."/>
            <person name="Chao Q."/>
            <person name="Choy N."/>
            <person name="Enju A."/>
            <person name="Goldsmith A.D."/>
            <person name="Gurjal M."/>
            <person name="Hansen N.F."/>
            <person name="Hayashizaki Y."/>
            <person name="Johnson-Hopson C."/>
            <person name="Hsuan V.W."/>
            <person name="Iida K."/>
            <person name="Karnes M."/>
            <person name="Khan S."/>
            <person name="Koesema E."/>
            <person name="Ishida J."/>
            <person name="Jiang P.X."/>
            <person name="Jones T."/>
            <person name="Kawai J."/>
            <person name="Kamiya A."/>
            <person name="Meyers C."/>
            <person name="Nakajima M."/>
            <person name="Narusaka M."/>
            <person name="Seki M."/>
            <person name="Sakurai T."/>
            <person name="Satou M."/>
            <person name="Tamse R."/>
            <person name="Vaysberg M."/>
            <person name="Wallender E.K."/>
            <person name="Wong C."/>
            <person name="Yamamura Y."/>
            <person name="Yuan S."/>
            <person name="Shinozaki K."/>
            <person name="Davis R.W."/>
            <person name="Theologis A."/>
            <person name="Ecker J.R."/>
        </authorList>
    </citation>
    <scope>NUCLEOTIDE SEQUENCE [LARGE SCALE MRNA]</scope>
    <source>
        <strain>cv. Columbia</strain>
    </source>
</reference>
<reference key="6">
    <citation type="journal article" date="2002" name="Trends Plant Sci.">
        <title>bZIP transcription factors in Arabidopsis.</title>
        <authorList>
            <person name="Jakoby M."/>
            <person name="Weisshaar B."/>
            <person name="Droege-Laser W."/>
            <person name="Vicente-Carbajosa J."/>
            <person name="Tiedemann J."/>
            <person name="Kroj T."/>
            <person name="Parcy F."/>
        </authorList>
    </citation>
    <scope>GENE FAMILY</scope>
    <scope>NOMENCLATURE</scope>
</reference>
<reference key="7">
    <citation type="journal article" date="2005" name="J. Exp. Bot.">
        <title>Characterization of three homologous basic leucine zipper transcription factors (bZIP) of the ABI5 family during Arabidopsis thaliana embryo maturation.</title>
        <authorList>
            <person name="Bensmihen S."/>
            <person name="Giraudat J."/>
            <person name="Parcy F."/>
        </authorList>
    </citation>
    <scope>SUBCELLULAR LOCATION</scope>
    <scope>DEVELOPMENTAL STAGE</scope>
</reference>
<reference key="8">
    <citation type="journal article" date="2008" name="Plant Mol. Biol.">
        <title>A small plant-specific protein family of ABI five binding proteins (AFPs) regulates stress response in germinating Arabidopsis seeds and seedlings.</title>
        <authorList>
            <person name="Garcia M.E."/>
            <person name="Lynch T.J."/>
            <person name="Peeters J."/>
            <person name="Snowden C."/>
            <person name="Finkelstein R.R."/>
        </authorList>
    </citation>
    <scope>INTERACTION WITH AFP1; AFP2; AFP3 AND AFP4</scope>
</reference>
<reference key="9">
    <citation type="journal article" date="2009" name="Plant Physiol.">
        <title>Large-scale Arabidopsis phosphoproteome profiling reveals novel chloroplast kinase substrates and phosphorylation networks.</title>
        <authorList>
            <person name="Reiland S."/>
            <person name="Messerli G."/>
            <person name="Baerenfaller K."/>
            <person name="Gerrits B."/>
            <person name="Endler A."/>
            <person name="Grossmann J."/>
            <person name="Gruissem W."/>
            <person name="Baginsky S."/>
        </authorList>
    </citation>
    <scope>PHOSPHORYLATION [LARGE SCALE ANALYSIS] AT SER-43</scope>
    <scope>IDENTIFICATION BY MASS SPECTROMETRY [LARGE SCALE ANALYSIS]</scope>
</reference>
<organism>
    <name type="scientific">Arabidopsis thaliana</name>
    <name type="common">Mouse-ear cress</name>
    <dbReference type="NCBI Taxonomy" id="3702"/>
    <lineage>
        <taxon>Eukaryota</taxon>
        <taxon>Viridiplantae</taxon>
        <taxon>Streptophyta</taxon>
        <taxon>Embryophyta</taxon>
        <taxon>Tracheophyta</taxon>
        <taxon>Spermatophyta</taxon>
        <taxon>Magnoliopsida</taxon>
        <taxon>eudicotyledons</taxon>
        <taxon>Gunneridae</taxon>
        <taxon>Pentapetalae</taxon>
        <taxon>rosids</taxon>
        <taxon>malvids</taxon>
        <taxon>Brassicales</taxon>
        <taxon>Brassicaceae</taxon>
        <taxon>Camelineae</taxon>
        <taxon>Arabidopsis</taxon>
    </lineage>
</organism>
<accession>Q9LES3</accession>
<accession>Q9C5Q3</accession>
<protein>
    <recommendedName>
        <fullName>ABSCISIC ACID-INSENSITIVE 5-like protein 2</fullName>
    </recommendedName>
    <alternativeName>
        <fullName>ABA-responsive element-binding protein 3</fullName>
    </alternativeName>
    <alternativeName>
        <fullName>Dc3 promoter-binding factor 3</fullName>
        <shortName>AtDPBF3</shortName>
    </alternativeName>
    <alternativeName>
        <fullName>bZIP transcription factor 66</fullName>
        <shortName>AtbZIP66</shortName>
    </alternativeName>
</protein>